<dbReference type="EMBL" id="CP000253">
    <property type="protein sequence ID" value="ABD30059.1"/>
    <property type="molecule type" value="Genomic_DNA"/>
</dbReference>
<dbReference type="SMR" id="Q2G1U6"/>
<dbReference type="STRING" id="93061.SAOUHSC_00934"/>
<dbReference type="PaxDb" id="1280-SAXN108_0993"/>
<dbReference type="KEGG" id="sao:SAOUHSC_00934"/>
<dbReference type="PATRIC" id="fig|93061.5.peg.855"/>
<dbReference type="eggNOG" id="COG1393">
    <property type="taxonomic scope" value="Bacteria"/>
</dbReference>
<dbReference type="HOGENOM" id="CLU_116644_1_1_9"/>
<dbReference type="OrthoDB" id="9794155at2"/>
<dbReference type="Proteomes" id="UP000008816">
    <property type="component" value="Chromosome"/>
</dbReference>
<dbReference type="GO" id="GO:0005737">
    <property type="term" value="C:cytoplasm"/>
    <property type="evidence" value="ECO:0007669"/>
    <property type="project" value="UniProtKB-SubCell"/>
</dbReference>
<dbReference type="GO" id="GO:0045892">
    <property type="term" value="P:negative regulation of DNA-templated transcription"/>
    <property type="evidence" value="ECO:0007669"/>
    <property type="project" value="InterPro"/>
</dbReference>
<dbReference type="CDD" id="cd03032">
    <property type="entry name" value="ArsC_Spx"/>
    <property type="match status" value="1"/>
</dbReference>
<dbReference type="Gene3D" id="3.40.30.10">
    <property type="entry name" value="Glutaredoxin"/>
    <property type="match status" value="1"/>
</dbReference>
<dbReference type="HAMAP" id="MF_01132">
    <property type="entry name" value="Spx"/>
    <property type="match status" value="1"/>
</dbReference>
<dbReference type="InterPro" id="IPR006660">
    <property type="entry name" value="Arsenate_reductase-like"/>
</dbReference>
<dbReference type="InterPro" id="IPR023731">
    <property type="entry name" value="Spx"/>
</dbReference>
<dbReference type="InterPro" id="IPR036249">
    <property type="entry name" value="Thioredoxin-like_sf"/>
</dbReference>
<dbReference type="InterPro" id="IPR006504">
    <property type="entry name" value="Tscrpt_reg_Spx/MgsR"/>
</dbReference>
<dbReference type="NCBIfam" id="TIGR01617">
    <property type="entry name" value="arsC_related"/>
    <property type="match status" value="1"/>
</dbReference>
<dbReference type="NCBIfam" id="NF002459">
    <property type="entry name" value="PRK01655.1"/>
    <property type="match status" value="1"/>
</dbReference>
<dbReference type="NCBIfam" id="NF009210">
    <property type="entry name" value="PRK12559.1"/>
    <property type="match status" value="1"/>
</dbReference>
<dbReference type="PANTHER" id="PTHR30041">
    <property type="entry name" value="ARSENATE REDUCTASE"/>
    <property type="match status" value="1"/>
</dbReference>
<dbReference type="PANTHER" id="PTHR30041:SF7">
    <property type="entry name" value="GLOBAL TRANSCRIPTIONAL REGULATOR SPX"/>
    <property type="match status" value="1"/>
</dbReference>
<dbReference type="Pfam" id="PF03960">
    <property type="entry name" value="ArsC"/>
    <property type="match status" value="1"/>
</dbReference>
<dbReference type="SUPFAM" id="SSF52833">
    <property type="entry name" value="Thioredoxin-like"/>
    <property type="match status" value="1"/>
</dbReference>
<dbReference type="PROSITE" id="PS51353">
    <property type="entry name" value="ARSC"/>
    <property type="match status" value="1"/>
</dbReference>
<name>SPX_STAA8</name>
<reference key="1">
    <citation type="book" date="2006" name="Gram positive pathogens, 2nd edition">
        <title>The Staphylococcus aureus NCTC 8325 genome.</title>
        <editorList>
            <person name="Fischetti V."/>
            <person name="Novick R."/>
            <person name="Ferretti J."/>
            <person name="Portnoy D."/>
            <person name="Rood J."/>
        </editorList>
        <authorList>
            <person name="Gillaspy A.F."/>
            <person name="Worrell V."/>
            <person name="Orvis J."/>
            <person name="Roe B.A."/>
            <person name="Dyer D.W."/>
            <person name="Iandolo J.J."/>
        </authorList>
    </citation>
    <scope>NUCLEOTIDE SEQUENCE [LARGE SCALE GENOMIC DNA]</scope>
    <source>
        <strain>NCTC 8325 / PS 47</strain>
    </source>
</reference>
<reference key="2">
    <citation type="journal article" date="2006" name="J. Bacteriol.">
        <title>Spx is a global effector impacting stress tolerance and biofilm formation in Staphylococcus aureus.</title>
        <authorList>
            <person name="Pamp S.J."/>
            <person name="Frees D."/>
            <person name="Engelmann S."/>
            <person name="Hecker M."/>
            <person name="Ingmer H."/>
        </authorList>
    </citation>
    <scope>FUNCTION</scope>
    <scope>ACTIVITY REGULATION</scope>
    <scope>DISRUPTION PHENOTYPE</scope>
    <source>
        <strain>8325-4</strain>
    </source>
</reference>
<reference key="3">
    <citation type="journal article" date="2013" name="Antimicrob. Agents Chemother.">
        <title>The Staphylococcus aureus thiol/oxidative stress global regulator Spx controls trfA, a gene implicated in cell wall antibiotic resistance.</title>
        <authorList>
            <person name="Jousselin A."/>
            <person name="Kelley W.L."/>
            <person name="Barras C."/>
            <person name="Lew D.P."/>
            <person name="Renzoni A."/>
        </authorList>
    </citation>
    <scope>FUNCTION</scope>
    <source>
        <strain>8325-4</strain>
    </source>
</reference>
<reference key="4">
    <citation type="journal article" date="2020" name="Front. Microbiol.">
        <title>YjbH solubility controls Spx in Staphylococcus aureus: implication for MazEF toxin-antitoxin system regulation.</title>
        <authorList>
            <person name="Panasenko O.O."/>
            <person name="Bezrukov F."/>
            <person name="Komarynets O."/>
            <person name="Renzoni A."/>
        </authorList>
    </citation>
    <scope>FUNCTION</scope>
    <scope>ACTIVITY REGULATION</scope>
    <source>
        <strain>HG003</strain>
    </source>
</reference>
<sequence length="131" mass="15441">MVTLFTSPSCTSCRKAKAWLQEHDIPYTERNIFSEHLTIDEIKQILKMTEDGTDEIISTRSKTYQKLNVDIDSLPLQDLYSIIQDNPGLLRRPIILDNKRLQVGYNEDEIRRFLPRKVRTFQLQEAQRMVD</sequence>
<comment type="function">
    <text evidence="1 2">Global transcriptional regulator that plays a key role in stress response and exerts either positive or negative regulation of genes (PubMed:16788195). Acts by interacting with the C-terminal domain of the alpha subunit of the RNA polymerase (RNAP) (By similarity). This interaction can enhance binding of RNAP to the promoter region of target genes and stimulate their transcription, or block interaction of RNAP with activator proteins and repress transcription (By similarity).</text>
</comment>
<comment type="function">
    <text evidence="2 3 4">Required for transcription of thioredoxin reductase (trxB). Modulates the expression of icaR, encoding a repressor of the biofilm operon icaADBC (PubMed:16788195). Also controls the transcription of trfA, a gene implicated in cell wall antibiotic resistance, which in turn is required for degradation of MazE antitoxin, the unstable component of the MazEF toxin-antitoxin system, that neutralizes the endoribonuclease activity of MazF toxin (PubMed:23629700, PubMed:32117138).</text>
</comment>
<comment type="activity regulation">
    <text evidence="2 4">Under non-stress conditions, Spx is degraded by ClpXP (PubMed:16788195). Efficient degradation by ClpXP requires the adapter protein SpxH/YjbH (PubMed:32117138). Function, levels and solubility of Spx are affected by SpxH/YjbH aggregation and stress conditions (PubMed:32117138).</text>
</comment>
<comment type="subunit">
    <text evidence="1">Interacts with the C-terminal domain of the alpha subunit of the RNAP.</text>
</comment>
<comment type="subcellular location">
    <subcellularLocation>
        <location evidence="1">Cytoplasm</location>
    </subcellularLocation>
</comment>
<comment type="disruption phenotype">
    <text evidence="2">Inactivation of the gene renders the cells hypersensitive to a wide range of stress conditions including high and low temperature, high osmolarity and hydrogen peroxide (PubMed:16788195). Inactivation also enhances biofilm formation (PubMed:16788195).</text>
</comment>
<comment type="similarity">
    <text evidence="1">Belongs to the ArsC family. Spx subfamily.</text>
</comment>
<gene>
    <name evidence="1 5" type="primary">spx</name>
    <name evidence="6" type="ordered locus">SAOUHSC_00934</name>
</gene>
<feature type="chain" id="PRO_0000451566" description="Global transcriptional regulator Spx">
    <location>
        <begin position="1"/>
        <end position="131"/>
    </location>
</feature>
<feature type="disulfide bond" description="Redox-active" evidence="1">
    <location>
        <begin position="10"/>
        <end position="13"/>
    </location>
</feature>
<protein>
    <recommendedName>
        <fullName evidence="1">Global transcriptional regulator Spx</fullName>
    </recommendedName>
</protein>
<evidence type="ECO:0000255" key="1">
    <source>
        <dbReference type="HAMAP-Rule" id="MF_01132"/>
    </source>
</evidence>
<evidence type="ECO:0000269" key="2">
    <source>
    </source>
</evidence>
<evidence type="ECO:0000269" key="3">
    <source>
    </source>
</evidence>
<evidence type="ECO:0000269" key="4">
    <source>
    </source>
</evidence>
<evidence type="ECO:0000303" key="5">
    <source>
    </source>
</evidence>
<evidence type="ECO:0000312" key="6">
    <source>
        <dbReference type="EMBL" id="ABD30059.1"/>
    </source>
</evidence>
<organism>
    <name type="scientific">Staphylococcus aureus (strain NCTC 8325 / PS 47)</name>
    <dbReference type="NCBI Taxonomy" id="93061"/>
    <lineage>
        <taxon>Bacteria</taxon>
        <taxon>Bacillati</taxon>
        <taxon>Bacillota</taxon>
        <taxon>Bacilli</taxon>
        <taxon>Bacillales</taxon>
        <taxon>Staphylococcaceae</taxon>
        <taxon>Staphylococcus</taxon>
    </lineage>
</organism>
<proteinExistence type="inferred from homology"/>
<keyword id="KW-0963">Cytoplasm</keyword>
<keyword id="KW-1015">Disulfide bond</keyword>
<keyword id="KW-0676">Redox-active center</keyword>
<keyword id="KW-1185">Reference proteome</keyword>
<keyword id="KW-0804">Transcription</keyword>
<keyword id="KW-0805">Transcription regulation</keyword>
<accession>Q2G1U6</accession>